<name>NIKR_CHLP8</name>
<protein>
    <recommendedName>
        <fullName evidence="1">Putative nickel-responsive regulator</fullName>
    </recommendedName>
</protein>
<feature type="chain" id="PRO_1000125811" description="Putative nickel-responsive regulator">
    <location>
        <begin position="1"/>
        <end position="134"/>
    </location>
</feature>
<feature type="binding site" evidence="1">
    <location>
        <position position="78"/>
    </location>
    <ligand>
        <name>Ni(2+)</name>
        <dbReference type="ChEBI" id="CHEBI:49786"/>
    </ligand>
</feature>
<feature type="binding site" evidence="1">
    <location>
        <position position="89"/>
    </location>
    <ligand>
        <name>Ni(2+)</name>
        <dbReference type="ChEBI" id="CHEBI:49786"/>
    </ligand>
</feature>
<feature type="binding site" evidence="1">
    <location>
        <position position="91"/>
    </location>
    <ligand>
        <name>Ni(2+)</name>
        <dbReference type="ChEBI" id="CHEBI:49786"/>
    </ligand>
</feature>
<feature type="binding site" evidence="1">
    <location>
        <position position="97"/>
    </location>
    <ligand>
        <name>Ni(2+)</name>
        <dbReference type="ChEBI" id="CHEBI:49786"/>
    </ligand>
</feature>
<accession>B3QLJ9</accession>
<organism>
    <name type="scientific">Chlorobaculum parvum (strain DSM 263 / NCIMB 8327)</name>
    <name type="common">Chlorobium vibrioforme subsp. thiosulfatophilum</name>
    <dbReference type="NCBI Taxonomy" id="517417"/>
    <lineage>
        <taxon>Bacteria</taxon>
        <taxon>Pseudomonadati</taxon>
        <taxon>Chlorobiota</taxon>
        <taxon>Chlorobiia</taxon>
        <taxon>Chlorobiales</taxon>
        <taxon>Chlorobiaceae</taxon>
        <taxon>Chlorobaculum</taxon>
    </lineage>
</organism>
<dbReference type="EMBL" id="CP001099">
    <property type="protein sequence ID" value="ACF10889.1"/>
    <property type="molecule type" value="Genomic_DNA"/>
</dbReference>
<dbReference type="RefSeq" id="WP_012501722.1">
    <property type="nucleotide sequence ID" value="NC_011027.1"/>
</dbReference>
<dbReference type="SMR" id="B3QLJ9"/>
<dbReference type="STRING" id="517417.Cpar_0467"/>
<dbReference type="KEGG" id="cpc:Cpar_0467"/>
<dbReference type="eggNOG" id="COG0864">
    <property type="taxonomic scope" value="Bacteria"/>
</dbReference>
<dbReference type="HOGENOM" id="CLU_113319_1_2_10"/>
<dbReference type="OrthoDB" id="9806294at2"/>
<dbReference type="Proteomes" id="UP000008811">
    <property type="component" value="Chromosome"/>
</dbReference>
<dbReference type="GO" id="GO:0003677">
    <property type="term" value="F:DNA binding"/>
    <property type="evidence" value="ECO:0007669"/>
    <property type="project" value="UniProtKB-KW"/>
</dbReference>
<dbReference type="GO" id="GO:0003700">
    <property type="term" value="F:DNA-binding transcription factor activity"/>
    <property type="evidence" value="ECO:0007669"/>
    <property type="project" value="UniProtKB-UniRule"/>
</dbReference>
<dbReference type="GO" id="GO:0016151">
    <property type="term" value="F:nickel cation binding"/>
    <property type="evidence" value="ECO:0007669"/>
    <property type="project" value="UniProtKB-UniRule"/>
</dbReference>
<dbReference type="GO" id="GO:0010045">
    <property type="term" value="P:response to nickel cation"/>
    <property type="evidence" value="ECO:0007669"/>
    <property type="project" value="InterPro"/>
</dbReference>
<dbReference type="CDD" id="cd22231">
    <property type="entry name" value="RHH_NikR_HicB-like"/>
    <property type="match status" value="1"/>
</dbReference>
<dbReference type="Gene3D" id="3.30.70.1150">
    <property type="entry name" value="ACT-like. Chain A, domain 2"/>
    <property type="match status" value="1"/>
</dbReference>
<dbReference type="Gene3D" id="1.10.1220.10">
    <property type="entry name" value="Met repressor-like"/>
    <property type="match status" value="1"/>
</dbReference>
<dbReference type="HAMAP" id="MF_00476">
    <property type="entry name" value="NikR"/>
    <property type="match status" value="1"/>
</dbReference>
<dbReference type="InterPro" id="IPR027271">
    <property type="entry name" value="Acetolactate_synth/TF_NikR_C"/>
</dbReference>
<dbReference type="InterPro" id="IPR045865">
    <property type="entry name" value="ACT-like_dom_sf"/>
</dbReference>
<dbReference type="InterPro" id="IPR013321">
    <property type="entry name" value="Arc_rbn_hlx_hlx"/>
</dbReference>
<dbReference type="InterPro" id="IPR002145">
    <property type="entry name" value="CopG"/>
</dbReference>
<dbReference type="InterPro" id="IPR050192">
    <property type="entry name" value="CopG/NikR_regulator"/>
</dbReference>
<dbReference type="InterPro" id="IPR022988">
    <property type="entry name" value="Ni_resp_reg_NikR"/>
</dbReference>
<dbReference type="InterPro" id="IPR010985">
    <property type="entry name" value="Ribbon_hlx_hlx"/>
</dbReference>
<dbReference type="InterPro" id="IPR014864">
    <property type="entry name" value="TF_NikR_Ni-bd_C"/>
</dbReference>
<dbReference type="NCBIfam" id="NF001884">
    <property type="entry name" value="PRK00630.1"/>
    <property type="match status" value="1"/>
</dbReference>
<dbReference type="NCBIfam" id="NF002169">
    <property type="entry name" value="PRK01002.1"/>
    <property type="match status" value="1"/>
</dbReference>
<dbReference type="NCBIfam" id="NF002815">
    <property type="entry name" value="PRK02967.1"/>
    <property type="match status" value="1"/>
</dbReference>
<dbReference type="NCBIfam" id="NF003381">
    <property type="entry name" value="PRK04460.1"/>
    <property type="match status" value="1"/>
</dbReference>
<dbReference type="PANTHER" id="PTHR34719">
    <property type="entry name" value="NICKEL-RESPONSIVE REGULATOR"/>
    <property type="match status" value="1"/>
</dbReference>
<dbReference type="PANTHER" id="PTHR34719:SF2">
    <property type="entry name" value="NICKEL-RESPONSIVE REGULATOR"/>
    <property type="match status" value="1"/>
</dbReference>
<dbReference type="Pfam" id="PF08753">
    <property type="entry name" value="NikR_C"/>
    <property type="match status" value="1"/>
</dbReference>
<dbReference type="Pfam" id="PF01402">
    <property type="entry name" value="RHH_1"/>
    <property type="match status" value="1"/>
</dbReference>
<dbReference type="SUPFAM" id="SSF55021">
    <property type="entry name" value="ACT-like"/>
    <property type="match status" value="1"/>
</dbReference>
<dbReference type="SUPFAM" id="SSF47598">
    <property type="entry name" value="Ribbon-helix-helix"/>
    <property type="match status" value="1"/>
</dbReference>
<reference key="1">
    <citation type="submission" date="2008-06" db="EMBL/GenBank/DDBJ databases">
        <title>Complete sequence of Chlorobaculum parvum NCIB 8327.</title>
        <authorList>
            <consortium name="US DOE Joint Genome Institute"/>
            <person name="Lucas S."/>
            <person name="Copeland A."/>
            <person name="Lapidus A."/>
            <person name="Glavina del Rio T."/>
            <person name="Dalin E."/>
            <person name="Tice H."/>
            <person name="Bruce D."/>
            <person name="Goodwin L."/>
            <person name="Pitluck S."/>
            <person name="Schmutz J."/>
            <person name="Larimer F."/>
            <person name="Land M."/>
            <person name="Hauser L."/>
            <person name="Kyrpides N."/>
            <person name="Mikhailova N."/>
            <person name="Zhao F."/>
            <person name="Li T."/>
            <person name="Liu Z."/>
            <person name="Overmann J."/>
            <person name="Bryant D.A."/>
            <person name="Richardson P."/>
        </authorList>
    </citation>
    <scope>NUCLEOTIDE SEQUENCE [LARGE SCALE GENOMIC DNA]</scope>
    <source>
        <strain>DSM 263 / NCIMB 8327</strain>
    </source>
</reference>
<comment type="function">
    <text evidence="1">Transcriptional regulator.</text>
</comment>
<comment type="cofactor">
    <cofactor evidence="1">
        <name>Ni(2+)</name>
        <dbReference type="ChEBI" id="CHEBI:49786"/>
    </cofactor>
    <text evidence="1">Binds 1 nickel ion per subunit.</text>
</comment>
<comment type="similarity">
    <text evidence="1">Belongs to the transcriptional regulatory CopG/NikR family.</text>
</comment>
<keyword id="KW-0238">DNA-binding</keyword>
<keyword id="KW-0479">Metal-binding</keyword>
<keyword id="KW-0533">Nickel</keyword>
<keyword id="KW-0804">Transcription</keyword>
<keyword id="KW-0805">Transcription regulation</keyword>
<gene>
    <name type="ordered locus">Cpar_0467</name>
</gene>
<proteinExistence type="inferred from homology"/>
<sequence length="134" mass="15119">MSDLYRFGISLDRELIEAFDRHIKGQGYQSRSEALRDLIRNELLRKTTAEGGLVAGAIVMTYDHHKRELVNRLIDIQHDFHDLIISTQHVHLDHENCLEVIAVKGNAPDIEKLSSALKVLVGVKHLDLSLSSAD</sequence>
<evidence type="ECO:0000255" key="1">
    <source>
        <dbReference type="HAMAP-Rule" id="MF_00476"/>
    </source>
</evidence>